<proteinExistence type="evidence at protein level"/>
<comment type="function">
    <text evidence="1">Protein-lysine N-methyltransferase that monomethylates both histones and non-histone proteins. Specifically monomethylates 'Lys-20' of histone H4 (H4K20me1). H4K20me1 is enriched during mitosis and represents a specific tag for epigenetic transcriptional repression. Mainly functions in euchromatin regions, thereby playing a central role in the silencing of euchromatic genes. Required for cell proliferation, probably by contributing to the maintenance of proper higher-order structure of DNA during mitosis. Involved in chromosome condensation and proper cytokinesis. Nucleosomes are preferred as substrate compared to free histones. Mediates monomethylation of p53/TP53 at 'Lys-382', leading to repress p53/TP53-target genes. Plays a negative role in TGF-beta response regulation and a positive role in cell migration.</text>
</comment>
<comment type="catalytic activity">
    <reaction evidence="1 3">
        <text>L-lysyl(20)-[histone H4] + S-adenosyl-L-methionine = N(6)-methyl-L-lysyl(20)-[histone H4] + S-adenosyl-L-homocysteine + H(+)</text>
        <dbReference type="Rhea" id="RHEA:60344"/>
        <dbReference type="Rhea" id="RHEA-COMP:15554"/>
        <dbReference type="Rhea" id="RHEA-COMP:15555"/>
        <dbReference type="ChEBI" id="CHEBI:15378"/>
        <dbReference type="ChEBI" id="CHEBI:29969"/>
        <dbReference type="ChEBI" id="CHEBI:57856"/>
        <dbReference type="ChEBI" id="CHEBI:59789"/>
        <dbReference type="ChEBI" id="CHEBI:61929"/>
        <dbReference type="EC" id="2.1.1.361"/>
    </reaction>
</comment>
<comment type="catalytic activity">
    <reaction evidence="1">
        <text>L-lysyl-[protein] + S-adenosyl-L-methionine = N(6)-methyl-L-lysyl-[protein] + S-adenosyl-L-homocysteine + H(+)</text>
        <dbReference type="Rhea" id="RHEA:51736"/>
        <dbReference type="Rhea" id="RHEA-COMP:9752"/>
        <dbReference type="Rhea" id="RHEA-COMP:13053"/>
        <dbReference type="ChEBI" id="CHEBI:15378"/>
        <dbReference type="ChEBI" id="CHEBI:29969"/>
        <dbReference type="ChEBI" id="CHEBI:57856"/>
        <dbReference type="ChEBI" id="CHEBI:59789"/>
        <dbReference type="ChEBI" id="CHEBI:61929"/>
    </reaction>
</comment>
<comment type="subunit">
    <text evidence="1">Interacts with L3MBTL1. Interacts with SIRT2 (phosphorylated form); the interaction is direct, stimulates KMT5A-mediated methyltransferase activity at histone H4 'Lys-20' (H4K20me1) and is increased in a H(2)O(2)-induced oxidative stress-dependent manner (By similarity).</text>
</comment>
<comment type="subcellular location">
    <subcellularLocation>
        <location evidence="1">Nucleus</location>
    </subcellularLocation>
    <subcellularLocation>
        <location evidence="5">Chromosome</location>
    </subcellularLocation>
    <text evidence="1 5">Specifically localizes to mitotic chromosomes. Associates with silent chromatin on euchromatic arms. Not associated with constitutive heterochromatin (By similarity). Colocalized with SIRT2 at mitotic foci. Associates with chromosomes during mitosis; association is increased in a H(2)O(2)-induced oxidative stress-dependent manner.</text>
</comment>
<comment type="domain">
    <text evidence="1">Although the SET domain contains the active site of enzymatic activity, both sequences upstream and downstream of the SET domain are required for methyltransferase activity.</text>
</comment>
<comment type="PTM">
    <text evidence="6">Ubiquitinated and degraded by the DCX(DTL) complex.</text>
</comment>
<comment type="similarity">
    <text evidence="3">Belongs to the class V-like SAM-binding methyltransferase superfamily. Histone-lysine methyltransferase family. PR/SET subfamily.</text>
</comment>
<comment type="sequence caution" evidence="6">
    <conflict type="frameshift">
        <sequence resource="EMBL-CDS" id="BAC27178"/>
    </conflict>
</comment>
<protein>
    <recommendedName>
        <fullName evidence="6">N-lysine methyltransferase KMT5A</fullName>
        <ecNumber evidence="1">2.1.1.-</ecNumber>
    </recommendedName>
    <alternativeName>
        <fullName>H4-K20-HMTase KMT5A</fullName>
    </alternativeName>
    <alternativeName>
        <fullName>Histone-lysine N-methyltransferase KMT5A</fullName>
        <ecNumber evidence="1">2.1.1.361</ecNumber>
    </alternativeName>
    <alternativeName>
        <fullName evidence="1">Lysine-specific methylase 5A</fullName>
    </alternativeName>
    <alternativeName>
        <fullName>PR/SET domain-containing protein 07</fullName>
        <shortName>PR-Set7</shortName>
        <shortName>PR/SET07</shortName>
    </alternativeName>
    <alternativeName>
        <fullName>SET domain-containing protein 8</fullName>
    </alternativeName>
</protein>
<sequence>MARGRKMCKPRAVEAAAAAVAATAPGPEMVEQRGPGRPRSDGENVFAGQSKIYAYMSPNKCSAMRSPLQEENSVAHHEVKCPGKPLAGIYRKREEKRNTGNVIRSAVKSDEQKSKDTRRGPLAPFPNQKSEAAEPPKTPPPSCDSTNVAVAKQALKKSLKGKQAPRKKSQGKTQQNRKLTDFYPVRRSSRKSKAELQSEERKKNELIESGKEEGMKIDLIDGKGRGVIATKQFSRGDFVVEYHGDLIEITDAKKREALYVQDPSTGCYMYYFQYLSKTYCVDATQETNRLGRLINHSKCGNCQTKLHDIDGVPHLILIASRDIAAGEELLYDYGDRSKASIEAYPWLKH</sequence>
<organism>
    <name type="scientific">Mus musculus</name>
    <name type="common">Mouse</name>
    <dbReference type="NCBI Taxonomy" id="10090"/>
    <lineage>
        <taxon>Eukaryota</taxon>
        <taxon>Metazoa</taxon>
        <taxon>Chordata</taxon>
        <taxon>Craniata</taxon>
        <taxon>Vertebrata</taxon>
        <taxon>Euteleostomi</taxon>
        <taxon>Mammalia</taxon>
        <taxon>Eutheria</taxon>
        <taxon>Euarchontoglires</taxon>
        <taxon>Glires</taxon>
        <taxon>Rodentia</taxon>
        <taxon>Myomorpha</taxon>
        <taxon>Muroidea</taxon>
        <taxon>Muridae</taxon>
        <taxon>Murinae</taxon>
        <taxon>Mus</taxon>
        <taxon>Mus</taxon>
    </lineage>
</organism>
<dbReference type="EC" id="2.1.1.-" evidence="1"/>
<dbReference type="EC" id="2.1.1.361" evidence="1"/>
<dbReference type="EMBL" id="AK030904">
    <property type="protein sequence ID" value="BAC27178.1"/>
    <property type="status" value="ALT_FRAME"/>
    <property type="molecule type" value="mRNA"/>
</dbReference>
<dbReference type="EMBL" id="BC108333">
    <property type="protein sequence ID" value="AAI08334.1"/>
    <property type="molecule type" value="mRNA"/>
</dbReference>
<dbReference type="RefSeq" id="NP_001297652.1">
    <property type="nucleotide sequence ID" value="NM_001310723.1"/>
</dbReference>
<dbReference type="RefSeq" id="NP_001297656.1">
    <property type="nucleotide sequence ID" value="NM_001310727.1"/>
</dbReference>
<dbReference type="RefSeq" id="NP_084517.2">
    <property type="nucleotide sequence ID" value="NM_030241.3"/>
</dbReference>
<dbReference type="SMR" id="Q2YDW7"/>
<dbReference type="BioGRID" id="212564">
    <property type="interactions" value="2"/>
</dbReference>
<dbReference type="FunCoup" id="Q2YDW7">
    <property type="interactions" value="1616"/>
</dbReference>
<dbReference type="IntAct" id="Q2YDW7">
    <property type="interactions" value="1"/>
</dbReference>
<dbReference type="STRING" id="10090.ENSMUSP00000098275"/>
<dbReference type="iPTMnet" id="Q2YDW7"/>
<dbReference type="PhosphoSitePlus" id="Q2YDW7"/>
<dbReference type="PaxDb" id="10090-ENSMUSP00000052953"/>
<dbReference type="ProteomicsDB" id="264787"/>
<dbReference type="GeneID" id="67956"/>
<dbReference type="KEGG" id="mmu:67956"/>
<dbReference type="AGR" id="MGI:1915206"/>
<dbReference type="CTD" id="387893"/>
<dbReference type="MGI" id="MGI:1915206">
    <property type="gene designation" value="Kmt5a"/>
</dbReference>
<dbReference type="eggNOG" id="KOG1085">
    <property type="taxonomic scope" value="Eukaryota"/>
</dbReference>
<dbReference type="InParanoid" id="Q2YDW7"/>
<dbReference type="OrthoDB" id="5560686at2759"/>
<dbReference type="Reactome" id="R-MMU-3214841">
    <property type="pathway name" value="PKMTs methylate histone lysines"/>
</dbReference>
<dbReference type="Reactome" id="R-MMU-6804760">
    <property type="pathway name" value="Regulation of TP53 Activity through Methylation"/>
</dbReference>
<dbReference type="BioGRID-ORCS" id="67956">
    <property type="hits" value="18 hits in 82 CRISPR screens"/>
</dbReference>
<dbReference type="ChiTaRS" id="Kmt5a">
    <property type="organism name" value="mouse"/>
</dbReference>
<dbReference type="PRO" id="PR:Q2YDW7"/>
<dbReference type="Proteomes" id="UP000000589">
    <property type="component" value="Unplaced"/>
</dbReference>
<dbReference type="RNAct" id="Q2YDW7">
    <property type="molecule type" value="protein"/>
</dbReference>
<dbReference type="GO" id="GO:0005694">
    <property type="term" value="C:chromosome"/>
    <property type="evidence" value="ECO:0007669"/>
    <property type="project" value="UniProtKB-SubCell"/>
</dbReference>
<dbReference type="GO" id="GO:0005634">
    <property type="term" value="C:nucleus"/>
    <property type="evidence" value="ECO:0007669"/>
    <property type="project" value="UniProtKB-SubCell"/>
</dbReference>
<dbReference type="GO" id="GO:0140944">
    <property type="term" value="F:histone H4K20 monomethyltransferase activity"/>
    <property type="evidence" value="ECO:0007669"/>
    <property type="project" value="UniProtKB-EC"/>
</dbReference>
<dbReference type="GO" id="GO:0042054">
    <property type="term" value="F:histone methyltransferase activity"/>
    <property type="evidence" value="ECO:0000250"/>
    <property type="project" value="UniProtKB"/>
</dbReference>
<dbReference type="GO" id="GO:0016279">
    <property type="term" value="F:protein-lysine N-methyltransferase activity"/>
    <property type="evidence" value="ECO:0000250"/>
    <property type="project" value="UniProtKB"/>
</dbReference>
<dbReference type="GO" id="GO:0051301">
    <property type="term" value="P:cell division"/>
    <property type="evidence" value="ECO:0007669"/>
    <property type="project" value="UniProtKB-KW"/>
</dbReference>
<dbReference type="GO" id="GO:0000122">
    <property type="term" value="P:negative regulation of transcription by RNA polymerase II"/>
    <property type="evidence" value="ECO:0000250"/>
    <property type="project" value="UniProtKB"/>
</dbReference>
<dbReference type="GO" id="GO:0018026">
    <property type="term" value="P:peptidyl-lysine monomethylation"/>
    <property type="evidence" value="ECO:0000250"/>
    <property type="project" value="UniProtKB"/>
</dbReference>
<dbReference type="GO" id="GO:0043516">
    <property type="term" value="P:regulation of DNA damage response, signal transduction by p53 class mediator"/>
    <property type="evidence" value="ECO:0000250"/>
    <property type="project" value="UniProtKB"/>
</dbReference>
<dbReference type="CDD" id="cd10528">
    <property type="entry name" value="SET_SETD8"/>
    <property type="match status" value="1"/>
</dbReference>
<dbReference type="FunFam" id="2.170.270.10:FF:000021">
    <property type="entry name" value="Histone-lysine N-methyltransferase"/>
    <property type="match status" value="1"/>
</dbReference>
<dbReference type="Gene3D" id="2.170.270.10">
    <property type="entry name" value="SET domain"/>
    <property type="match status" value="1"/>
</dbReference>
<dbReference type="InterPro" id="IPR051760">
    <property type="entry name" value="KMT5A"/>
</dbReference>
<dbReference type="InterPro" id="IPR016858">
    <property type="entry name" value="KMT5A-like"/>
</dbReference>
<dbReference type="InterPro" id="IPR047266">
    <property type="entry name" value="KMT5A-like_SET"/>
</dbReference>
<dbReference type="InterPro" id="IPR001214">
    <property type="entry name" value="SET_dom"/>
</dbReference>
<dbReference type="InterPro" id="IPR046341">
    <property type="entry name" value="SET_dom_sf"/>
</dbReference>
<dbReference type="PANTHER" id="PTHR46167">
    <property type="entry name" value="N-LYSINE METHYLTRANSFERASE KMT5A"/>
    <property type="match status" value="1"/>
</dbReference>
<dbReference type="PANTHER" id="PTHR46167:SF1">
    <property type="entry name" value="N-LYSINE METHYLTRANSFERASE KMT5A"/>
    <property type="match status" value="1"/>
</dbReference>
<dbReference type="Pfam" id="PF00856">
    <property type="entry name" value="SET"/>
    <property type="match status" value="1"/>
</dbReference>
<dbReference type="PIRSF" id="PIRSF027717">
    <property type="entry name" value="Histone_H4-K20_mtfrase"/>
    <property type="match status" value="1"/>
</dbReference>
<dbReference type="SMART" id="SM00317">
    <property type="entry name" value="SET"/>
    <property type="match status" value="1"/>
</dbReference>
<dbReference type="SUPFAM" id="SSF82199">
    <property type="entry name" value="SET domain"/>
    <property type="match status" value="1"/>
</dbReference>
<dbReference type="PROSITE" id="PS51571">
    <property type="entry name" value="SAM_MT43_PR_SET"/>
    <property type="match status" value="1"/>
</dbReference>
<dbReference type="PROSITE" id="PS50280">
    <property type="entry name" value="SET"/>
    <property type="match status" value="1"/>
</dbReference>
<gene>
    <name evidence="1" type="primary">Kmt5a</name>
    <name type="synonym">Setd8</name>
</gene>
<keyword id="KW-0131">Cell cycle</keyword>
<keyword id="KW-0132">Cell division</keyword>
<keyword id="KW-0156">Chromatin regulator</keyword>
<keyword id="KW-0158">Chromosome</keyword>
<keyword id="KW-0489">Methyltransferase</keyword>
<keyword id="KW-0498">Mitosis</keyword>
<keyword id="KW-0539">Nucleus</keyword>
<keyword id="KW-0597">Phosphoprotein</keyword>
<keyword id="KW-1185">Reference proteome</keyword>
<keyword id="KW-0678">Repressor</keyword>
<keyword id="KW-0949">S-adenosyl-L-methionine</keyword>
<keyword id="KW-0804">Transcription</keyword>
<keyword id="KW-0805">Transcription regulation</keyword>
<keyword id="KW-0808">Transferase</keyword>
<keyword id="KW-0832">Ubl conjugation</keyword>
<feature type="chain" id="PRO_0000228689" description="N-lysine methyltransferase KMT5A">
    <location>
        <begin position="1"/>
        <end position="349"/>
    </location>
</feature>
<feature type="domain" description="SET" evidence="2">
    <location>
        <begin position="213"/>
        <end position="334"/>
    </location>
</feature>
<feature type="region of interest" description="Disordered" evidence="4">
    <location>
        <begin position="18"/>
        <end position="46"/>
    </location>
</feature>
<feature type="region of interest" description="Disordered" evidence="4">
    <location>
        <begin position="65"/>
        <end position="207"/>
    </location>
</feature>
<feature type="compositionally biased region" description="Basic and acidic residues" evidence="4">
    <location>
        <begin position="107"/>
        <end position="119"/>
    </location>
</feature>
<feature type="compositionally biased region" description="Basic residues" evidence="4">
    <location>
        <begin position="154"/>
        <end position="170"/>
    </location>
</feature>
<feature type="compositionally biased region" description="Basic and acidic residues" evidence="4">
    <location>
        <begin position="192"/>
        <end position="207"/>
    </location>
</feature>
<feature type="binding site" evidence="3">
    <location>
        <begin position="223"/>
        <end position="225"/>
    </location>
    <ligand>
        <name>S-adenosyl-L-methionine</name>
        <dbReference type="ChEBI" id="CHEBI:59789"/>
    </ligand>
</feature>
<feature type="binding site" evidence="2 3">
    <location>
        <position position="268"/>
    </location>
    <ligand>
        <name>S-adenosyl-L-methionine</name>
        <dbReference type="ChEBI" id="CHEBI:59789"/>
    </ligand>
</feature>
<feature type="binding site" evidence="3">
    <location>
        <begin position="295"/>
        <end position="296"/>
    </location>
    <ligand>
        <name>S-adenosyl-L-methionine</name>
        <dbReference type="ChEBI" id="CHEBI:59789"/>
    </ligand>
</feature>
<feature type="modified residue" description="Phosphoserine" evidence="1">
    <location>
        <position position="57"/>
    </location>
</feature>
<feature type="modified residue" description="Phosphothreonine" evidence="7">
    <location>
        <position position="138"/>
    </location>
</feature>
<feature type="sequence conflict" description="In Ref. 1; BAC27178." evidence="6" ref="1">
    <original>N</original>
    <variation>ID</variation>
    <location>
        <position position="204"/>
    </location>
</feature>
<feature type="sequence conflict" description="In Ref. 1; BAC27178." evidence="6" ref="1">
    <original>V</original>
    <variation>A</variation>
    <location>
        <position position="260"/>
    </location>
</feature>
<accession>Q2YDW7</accession>
<accession>Q8C0J9</accession>
<reference key="1">
    <citation type="journal article" date="2005" name="Science">
        <title>The transcriptional landscape of the mammalian genome.</title>
        <authorList>
            <person name="Carninci P."/>
            <person name="Kasukawa T."/>
            <person name="Katayama S."/>
            <person name="Gough J."/>
            <person name="Frith M.C."/>
            <person name="Maeda N."/>
            <person name="Oyama R."/>
            <person name="Ravasi T."/>
            <person name="Lenhard B."/>
            <person name="Wells C."/>
            <person name="Kodzius R."/>
            <person name="Shimokawa K."/>
            <person name="Bajic V.B."/>
            <person name="Brenner S.E."/>
            <person name="Batalov S."/>
            <person name="Forrest A.R."/>
            <person name="Zavolan M."/>
            <person name="Davis M.J."/>
            <person name="Wilming L.G."/>
            <person name="Aidinis V."/>
            <person name="Allen J.E."/>
            <person name="Ambesi-Impiombato A."/>
            <person name="Apweiler R."/>
            <person name="Aturaliya R.N."/>
            <person name="Bailey T.L."/>
            <person name="Bansal M."/>
            <person name="Baxter L."/>
            <person name="Beisel K.W."/>
            <person name="Bersano T."/>
            <person name="Bono H."/>
            <person name="Chalk A.M."/>
            <person name="Chiu K.P."/>
            <person name="Choudhary V."/>
            <person name="Christoffels A."/>
            <person name="Clutterbuck D.R."/>
            <person name="Crowe M.L."/>
            <person name="Dalla E."/>
            <person name="Dalrymple B.P."/>
            <person name="de Bono B."/>
            <person name="Della Gatta G."/>
            <person name="di Bernardo D."/>
            <person name="Down T."/>
            <person name="Engstrom P."/>
            <person name="Fagiolini M."/>
            <person name="Faulkner G."/>
            <person name="Fletcher C.F."/>
            <person name="Fukushima T."/>
            <person name="Furuno M."/>
            <person name="Futaki S."/>
            <person name="Gariboldi M."/>
            <person name="Georgii-Hemming P."/>
            <person name="Gingeras T.R."/>
            <person name="Gojobori T."/>
            <person name="Green R.E."/>
            <person name="Gustincich S."/>
            <person name="Harbers M."/>
            <person name="Hayashi Y."/>
            <person name="Hensch T.K."/>
            <person name="Hirokawa N."/>
            <person name="Hill D."/>
            <person name="Huminiecki L."/>
            <person name="Iacono M."/>
            <person name="Ikeo K."/>
            <person name="Iwama A."/>
            <person name="Ishikawa T."/>
            <person name="Jakt M."/>
            <person name="Kanapin A."/>
            <person name="Katoh M."/>
            <person name="Kawasawa Y."/>
            <person name="Kelso J."/>
            <person name="Kitamura H."/>
            <person name="Kitano H."/>
            <person name="Kollias G."/>
            <person name="Krishnan S.P."/>
            <person name="Kruger A."/>
            <person name="Kummerfeld S.K."/>
            <person name="Kurochkin I.V."/>
            <person name="Lareau L.F."/>
            <person name="Lazarevic D."/>
            <person name="Lipovich L."/>
            <person name="Liu J."/>
            <person name="Liuni S."/>
            <person name="McWilliam S."/>
            <person name="Madan Babu M."/>
            <person name="Madera M."/>
            <person name="Marchionni L."/>
            <person name="Matsuda H."/>
            <person name="Matsuzawa S."/>
            <person name="Miki H."/>
            <person name="Mignone F."/>
            <person name="Miyake S."/>
            <person name="Morris K."/>
            <person name="Mottagui-Tabar S."/>
            <person name="Mulder N."/>
            <person name="Nakano N."/>
            <person name="Nakauchi H."/>
            <person name="Ng P."/>
            <person name="Nilsson R."/>
            <person name="Nishiguchi S."/>
            <person name="Nishikawa S."/>
            <person name="Nori F."/>
            <person name="Ohara O."/>
            <person name="Okazaki Y."/>
            <person name="Orlando V."/>
            <person name="Pang K.C."/>
            <person name="Pavan W.J."/>
            <person name="Pavesi G."/>
            <person name="Pesole G."/>
            <person name="Petrovsky N."/>
            <person name="Piazza S."/>
            <person name="Reed J."/>
            <person name="Reid J.F."/>
            <person name="Ring B.Z."/>
            <person name="Ringwald M."/>
            <person name="Rost B."/>
            <person name="Ruan Y."/>
            <person name="Salzberg S.L."/>
            <person name="Sandelin A."/>
            <person name="Schneider C."/>
            <person name="Schoenbach C."/>
            <person name="Sekiguchi K."/>
            <person name="Semple C.A."/>
            <person name="Seno S."/>
            <person name="Sessa L."/>
            <person name="Sheng Y."/>
            <person name="Shibata Y."/>
            <person name="Shimada H."/>
            <person name="Shimada K."/>
            <person name="Silva D."/>
            <person name="Sinclair B."/>
            <person name="Sperling S."/>
            <person name="Stupka E."/>
            <person name="Sugiura K."/>
            <person name="Sultana R."/>
            <person name="Takenaka Y."/>
            <person name="Taki K."/>
            <person name="Tammoja K."/>
            <person name="Tan S.L."/>
            <person name="Tang S."/>
            <person name="Taylor M.S."/>
            <person name="Tegner J."/>
            <person name="Teichmann S.A."/>
            <person name="Ueda H.R."/>
            <person name="van Nimwegen E."/>
            <person name="Verardo R."/>
            <person name="Wei C.L."/>
            <person name="Yagi K."/>
            <person name="Yamanishi H."/>
            <person name="Zabarovsky E."/>
            <person name="Zhu S."/>
            <person name="Zimmer A."/>
            <person name="Hide W."/>
            <person name="Bult C."/>
            <person name="Grimmond S.M."/>
            <person name="Teasdale R.D."/>
            <person name="Liu E.T."/>
            <person name="Brusic V."/>
            <person name="Quackenbush J."/>
            <person name="Wahlestedt C."/>
            <person name="Mattick J.S."/>
            <person name="Hume D.A."/>
            <person name="Kai C."/>
            <person name="Sasaki D."/>
            <person name="Tomaru Y."/>
            <person name="Fukuda S."/>
            <person name="Kanamori-Katayama M."/>
            <person name="Suzuki M."/>
            <person name="Aoki J."/>
            <person name="Arakawa T."/>
            <person name="Iida J."/>
            <person name="Imamura K."/>
            <person name="Itoh M."/>
            <person name="Kato T."/>
            <person name="Kawaji H."/>
            <person name="Kawagashira N."/>
            <person name="Kawashima T."/>
            <person name="Kojima M."/>
            <person name="Kondo S."/>
            <person name="Konno H."/>
            <person name="Nakano K."/>
            <person name="Ninomiya N."/>
            <person name="Nishio T."/>
            <person name="Okada M."/>
            <person name="Plessy C."/>
            <person name="Shibata K."/>
            <person name="Shiraki T."/>
            <person name="Suzuki S."/>
            <person name="Tagami M."/>
            <person name="Waki K."/>
            <person name="Watahiki A."/>
            <person name="Okamura-Oho Y."/>
            <person name="Suzuki H."/>
            <person name="Kawai J."/>
            <person name="Hayashizaki Y."/>
        </authorList>
    </citation>
    <scope>NUCLEOTIDE SEQUENCE [LARGE SCALE MRNA]</scope>
    <source>
        <strain>C57BL/6J</strain>
        <tissue>Thymus</tissue>
    </source>
</reference>
<reference key="2">
    <citation type="journal article" date="2004" name="Genome Res.">
        <title>The status, quality, and expansion of the NIH full-length cDNA project: the Mammalian Gene Collection (MGC).</title>
        <authorList>
            <consortium name="The MGC Project Team"/>
        </authorList>
    </citation>
    <scope>NUCLEOTIDE SEQUENCE [LARGE SCALE MRNA]</scope>
    <source>
        <strain>NMRI</strain>
        <tissue>Mammary tumor</tissue>
    </source>
</reference>
<reference key="3">
    <citation type="journal article" date="2010" name="Cell">
        <title>A tissue-specific atlas of mouse protein phosphorylation and expression.</title>
        <authorList>
            <person name="Huttlin E.L."/>
            <person name="Jedrychowski M.P."/>
            <person name="Elias J.E."/>
            <person name="Goswami T."/>
            <person name="Rad R."/>
            <person name="Beausoleil S.A."/>
            <person name="Villen J."/>
            <person name="Haas W."/>
            <person name="Sowa M.E."/>
            <person name="Gygi S.P."/>
        </authorList>
    </citation>
    <scope>PHOSPHORYLATION [LARGE SCALE ANALYSIS] AT THR-138</scope>
    <scope>IDENTIFICATION BY MASS SPECTROMETRY [LARGE SCALE ANALYSIS]</scope>
    <source>
        <tissue>Spleen</tissue>
    </source>
</reference>
<reference key="4">
    <citation type="journal article" date="2013" name="Genes Dev.">
        <title>The tumor suppressor SirT2 regulates cell cycle progression and genome stability by modulating the mitotic deposition of H4K20 methylation.</title>
        <authorList>
            <person name="Serrano L."/>
            <person name="Martinez-Redondo P."/>
            <person name="Marazuela-Duque A."/>
            <person name="Vazquez B.N."/>
            <person name="Dooley S.J."/>
            <person name="Voigt P."/>
            <person name="Beck D.B."/>
            <person name="Kane-Goldsmith N."/>
            <person name="Tong Q."/>
            <person name="Rabanal R.M."/>
            <person name="Fondevila D."/>
            <person name="Munoz P."/>
            <person name="Kruger M."/>
            <person name="Tischfield J.A."/>
            <person name="Vaquero A."/>
        </authorList>
    </citation>
    <scope>SUBCELLULAR LOCATION</scope>
</reference>
<name>KMT5A_MOUSE</name>
<evidence type="ECO:0000250" key="1">
    <source>
        <dbReference type="UniProtKB" id="Q9NQR1"/>
    </source>
</evidence>
<evidence type="ECO:0000255" key="2">
    <source>
        <dbReference type="PROSITE-ProRule" id="PRU00190"/>
    </source>
</evidence>
<evidence type="ECO:0000255" key="3">
    <source>
        <dbReference type="PROSITE-ProRule" id="PRU00904"/>
    </source>
</evidence>
<evidence type="ECO:0000256" key="4">
    <source>
        <dbReference type="SAM" id="MobiDB-lite"/>
    </source>
</evidence>
<evidence type="ECO:0000269" key="5">
    <source>
    </source>
</evidence>
<evidence type="ECO:0000305" key="6"/>
<evidence type="ECO:0007744" key="7">
    <source>
    </source>
</evidence>